<feature type="chain" id="PRO_0000299370" description="Serine/threonine-protein phosphatase 4 regulatory subunit 2-A">
    <location>
        <begin position="1"/>
        <end position="420"/>
    </location>
</feature>
<feature type="region of interest" description="Disordered" evidence="2">
    <location>
        <begin position="157"/>
        <end position="420"/>
    </location>
</feature>
<feature type="compositionally biased region" description="Polar residues" evidence="2">
    <location>
        <begin position="182"/>
        <end position="195"/>
    </location>
</feature>
<feature type="compositionally biased region" description="Basic and acidic residues" evidence="2">
    <location>
        <begin position="196"/>
        <end position="210"/>
    </location>
</feature>
<feature type="compositionally biased region" description="Low complexity" evidence="2">
    <location>
        <begin position="212"/>
        <end position="224"/>
    </location>
</feature>
<feature type="compositionally biased region" description="Basic and acidic residues" evidence="2">
    <location>
        <begin position="229"/>
        <end position="250"/>
    </location>
</feature>
<feature type="compositionally biased region" description="Acidic residues" evidence="2">
    <location>
        <begin position="251"/>
        <end position="266"/>
    </location>
</feature>
<feature type="compositionally biased region" description="Basic and acidic residues" evidence="2">
    <location>
        <begin position="267"/>
        <end position="276"/>
    </location>
</feature>
<feature type="compositionally biased region" description="Polar residues" evidence="2">
    <location>
        <begin position="278"/>
        <end position="296"/>
    </location>
</feature>
<feature type="compositionally biased region" description="Basic and acidic residues" evidence="2">
    <location>
        <begin position="318"/>
        <end position="332"/>
    </location>
</feature>
<feature type="compositionally biased region" description="Acidic residues" evidence="2">
    <location>
        <begin position="346"/>
        <end position="364"/>
    </location>
</feature>
<feature type="compositionally biased region" description="Low complexity" evidence="2">
    <location>
        <begin position="368"/>
        <end position="394"/>
    </location>
</feature>
<feature type="compositionally biased region" description="Acidic residues" evidence="2">
    <location>
        <begin position="411"/>
        <end position="420"/>
    </location>
</feature>
<protein>
    <recommendedName>
        <fullName>Serine/threonine-protein phosphatase 4 regulatory subunit 2-A</fullName>
    </recommendedName>
</protein>
<evidence type="ECO:0000250" key="1"/>
<evidence type="ECO:0000256" key="2">
    <source>
        <dbReference type="SAM" id="MobiDB-lite"/>
    </source>
</evidence>
<evidence type="ECO:0000305" key="3"/>
<proteinExistence type="evidence at transcript level"/>
<name>P4R2A_DANRE</name>
<reference key="1">
    <citation type="submission" date="2003-11" db="EMBL/GenBank/DDBJ databases">
        <authorList>
            <consortium name="NIH - Zebrafish Gene Collection (ZGC) project"/>
        </authorList>
    </citation>
    <scope>NUCLEOTIDE SEQUENCE [LARGE SCALE MRNA]</scope>
    <source>
        <tissue>Ovary</tissue>
        <tissue>Retina</tissue>
    </source>
</reference>
<comment type="function">
    <text evidence="1">Regulatory subunit of serine/threonine-protein phosphatase 4 (PP4C).</text>
</comment>
<comment type="subunit">
    <text evidence="1">Serine/threonine-protein phosphatase 4 (PP4) occurs in different assemblies of the catalytic and one or more regulatory subunits.</text>
</comment>
<comment type="similarity">
    <text evidence="3">Belongs to the PPP4R2 family.</text>
</comment>
<comment type="sequence caution" evidence="3">
    <conflict type="erroneous initiation">
        <sequence resource="EMBL-CDS" id="AAH60912"/>
    </conflict>
</comment>
<comment type="sequence caution" evidence="3">
    <conflict type="erroneous initiation">
        <sequence resource="EMBL-CDS" id="AAI51886"/>
    </conflict>
</comment>
<accession>Q6P964</accession>
<accession>A7MBR6</accession>
<sequence>MEIDTLLGAFRDFEKKGEKESCPILDQFLSHVAKTGETMIQWSQFKSYFLFKLEKVMDDFKASCPEQRGPANPNVEYIPFEEMKQRILKIVNGYNGIPFTIQRLCELLTEPKRNYAGTDKFLRGVEKNVMVVSCVYPTSEKKGSSCVNRMNGVMFPGNTSAFPDRNVNGPGTPRPLNRPKHSLSSNVATNGLPDSTESKEQASEQSERTVNESSASEAESHSGAVKSKHRDDEDATHAETHEAKRLKFDKEEEEEEDDEEEDEDGDEIKKELDEPHSPCTSVAESSSDVPQSSTDVTAEVKDEDQEPSSTQSEVVENGVDRSTSEDSPDPSHKATGSESDPKEQQAEEEEEEESAEAQETEETNDPVSSSSNNSSDEGVSSAETPSASPSSSTELPAEGSVTAEITSDNSETADDNMEQD</sequence>
<gene>
    <name type="primary">ppp4r2a</name>
    <name type="synonym">ppp4r2</name>
    <name type="ORF">wu:fe11b04</name>
</gene>
<organism>
    <name type="scientific">Danio rerio</name>
    <name type="common">Zebrafish</name>
    <name type="synonym">Brachydanio rerio</name>
    <dbReference type="NCBI Taxonomy" id="7955"/>
    <lineage>
        <taxon>Eukaryota</taxon>
        <taxon>Metazoa</taxon>
        <taxon>Chordata</taxon>
        <taxon>Craniata</taxon>
        <taxon>Vertebrata</taxon>
        <taxon>Euteleostomi</taxon>
        <taxon>Actinopterygii</taxon>
        <taxon>Neopterygii</taxon>
        <taxon>Teleostei</taxon>
        <taxon>Ostariophysi</taxon>
        <taxon>Cypriniformes</taxon>
        <taxon>Danionidae</taxon>
        <taxon>Danioninae</taxon>
        <taxon>Danio</taxon>
    </lineage>
</organism>
<dbReference type="EMBL" id="BC060912">
    <property type="protein sequence ID" value="AAH60912.1"/>
    <property type="status" value="ALT_INIT"/>
    <property type="molecule type" value="mRNA"/>
</dbReference>
<dbReference type="EMBL" id="BC151885">
    <property type="protein sequence ID" value="AAI51886.1"/>
    <property type="status" value="ALT_INIT"/>
    <property type="molecule type" value="mRNA"/>
</dbReference>
<dbReference type="FunCoup" id="Q6P964">
    <property type="interactions" value="297"/>
</dbReference>
<dbReference type="STRING" id="7955.ENSDARP00000036492"/>
<dbReference type="PaxDb" id="7955-ENSDARP00000036492"/>
<dbReference type="AGR" id="ZFIN:ZDB-GENE-030131-4922"/>
<dbReference type="ZFIN" id="ZDB-GENE-030131-4922">
    <property type="gene designation" value="ppp4r2a"/>
</dbReference>
<dbReference type="eggNOG" id="KOG3175">
    <property type="taxonomic scope" value="Eukaryota"/>
</dbReference>
<dbReference type="InParanoid" id="Q6P964"/>
<dbReference type="PhylomeDB" id="Q6P964"/>
<dbReference type="Reactome" id="R-DRE-5693607">
    <property type="pathway name" value="Processing of DNA double-strand break ends"/>
</dbReference>
<dbReference type="PRO" id="PR:Q6P964"/>
<dbReference type="Proteomes" id="UP000000437">
    <property type="component" value="Unplaced"/>
</dbReference>
<dbReference type="GO" id="GO:0005737">
    <property type="term" value="C:cytoplasm"/>
    <property type="evidence" value="ECO:0000318"/>
    <property type="project" value="GO_Central"/>
</dbReference>
<dbReference type="GO" id="GO:0005634">
    <property type="term" value="C:nucleus"/>
    <property type="evidence" value="ECO:0000318"/>
    <property type="project" value="GO_Central"/>
</dbReference>
<dbReference type="GO" id="GO:0030289">
    <property type="term" value="C:protein phosphatase 4 complex"/>
    <property type="evidence" value="ECO:0000318"/>
    <property type="project" value="GO_Central"/>
</dbReference>
<dbReference type="GO" id="GO:0019888">
    <property type="term" value="F:protein phosphatase regulator activity"/>
    <property type="evidence" value="ECO:0000318"/>
    <property type="project" value="GO_Central"/>
</dbReference>
<dbReference type="InterPro" id="IPR015267">
    <property type="entry name" value="PPP4R2"/>
</dbReference>
<dbReference type="PANTHER" id="PTHR16487">
    <property type="entry name" value="PPP4R2-RELATED PROTEIN"/>
    <property type="match status" value="1"/>
</dbReference>
<dbReference type="PANTHER" id="PTHR16487:SF6">
    <property type="entry name" value="SERINE_THREONINE-PROTEIN PHOSPHATASE 4 REGULATORY SUBUNIT 2-A"/>
    <property type="match status" value="1"/>
</dbReference>
<dbReference type="Pfam" id="PF09184">
    <property type="entry name" value="PPP4R2"/>
    <property type="match status" value="1"/>
</dbReference>
<keyword id="KW-1185">Reference proteome</keyword>